<proteinExistence type="evidence at transcript level"/>
<comment type="function">
    <text evidence="2">Probable catalytic subunit of cellulose synthase terminal complexes ('rosettes'), required for beta-1,4-glucan microfibril crystallization, a major mechanism of the cell wall formation.</text>
</comment>
<comment type="catalytic activity">
    <reaction evidence="6">
        <text>[(1-&gt;4)-beta-D-glucosyl](n) + UDP-alpha-D-glucose = [(1-&gt;4)-beta-D-glucosyl](n+1) + UDP + H(+)</text>
        <dbReference type="Rhea" id="RHEA:19929"/>
        <dbReference type="Rhea" id="RHEA-COMP:10033"/>
        <dbReference type="Rhea" id="RHEA-COMP:10034"/>
        <dbReference type="ChEBI" id="CHEBI:15378"/>
        <dbReference type="ChEBI" id="CHEBI:18246"/>
        <dbReference type="ChEBI" id="CHEBI:58223"/>
        <dbReference type="ChEBI" id="CHEBI:58885"/>
        <dbReference type="EC" id="2.4.1.12"/>
    </reaction>
</comment>
<comment type="cofactor">
    <cofactor evidence="1">
        <name>Mn(2+)</name>
        <dbReference type="ChEBI" id="CHEBI:29035"/>
    </cofactor>
</comment>
<comment type="cofactor">
    <cofactor evidence="2">
        <name>Zn(2+)</name>
        <dbReference type="ChEBI" id="CHEBI:29105"/>
    </cofactor>
    <text evidence="2">Binds 2 Zn(2+) ions per subunit.</text>
</comment>
<comment type="pathway">
    <text>Glycan metabolism; plant cellulose biosynthesis.</text>
</comment>
<comment type="subcellular location">
    <subcellularLocation>
        <location evidence="6">Cell membrane</location>
        <topology evidence="6">Multi-pass membrane protein</topology>
    </subcellularLocation>
</comment>
<comment type="similarity">
    <text evidence="6">Belongs to the glycosyltransferase 2 family. Plant cellulose synthase subfamily.</text>
</comment>
<comment type="sequence caution" evidence="6">
    <conflict type="frameshift">
        <sequence resource="EMBL" id="AK073561"/>
    </conflict>
</comment>
<keyword id="KW-1003">Cell membrane</keyword>
<keyword id="KW-0961">Cell wall biogenesis/degradation</keyword>
<keyword id="KW-0135">Cellulose biosynthesis</keyword>
<keyword id="KW-0175">Coiled coil</keyword>
<keyword id="KW-0328">Glycosyltransferase</keyword>
<keyword id="KW-0464">Manganese</keyword>
<keyword id="KW-0472">Membrane</keyword>
<keyword id="KW-0479">Metal-binding</keyword>
<keyword id="KW-1185">Reference proteome</keyword>
<keyword id="KW-0808">Transferase</keyword>
<keyword id="KW-0812">Transmembrane</keyword>
<keyword id="KW-1133">Transmembrane helix</keyword>
<keyword id="KW-0862">Zinc</keyword>
<keyword id="KW-0863">Zinc-finger</keyword>
<reference key="1">
    <citation type="journal article" date="2005" name="Nature">
        <title>The map-based sequence of the rice genome.</title>
        <authorList>
            <consortium name="International rice genome sequencing project (IRGSP)"/>
        </authorList>
    </citation>
    <scope>NUCLEOTIDE SEQUENCE [LARGE SCALE GENOMIC DNA]</scope>
    <source>
        <strain>cv. Nipponbare</strain>
    </source>
</reference>
<reference key="2">
    <citation type="journal article" date="2008" name="Nucleic Acids Res.">
        <title>The rice annotation project database (RAP-DB): 2008 update.</title>
        <authorList>
            <consortium name="The rice annotation project (RAP)"/>
        </authorList>
    </citation>
    <scope>GENOME REANNOTATION</scope>
    <source>
        <strain>cv. Nipponbare</strain>
    </source>
</reference>
<reference key="3">
    <citation type="journal article" date="2013" name="Rice">
        <title>Improvement of the Oryza sativa Nipponbare reference genome using next generation sequence and optical map data.</title>
        <authorList>
            <person name="Kawahara Y."/>
            <person name="de la Bastide M."/>
            <person name="Hamilton J.P."/>
            <person name="Kanamori H."/>
            <person name="McCombie W.R."/>
            <person name="Ouyang S."/>
            <person name="Schwartz D.C."/>
            <person name="Tanaka T."/>
            <person name="Wu J."/>
            <person name="Zhou S."/>
            <person name="Childs K.L."/>
            <person name="Davidson R.M."/>
            <person name="Lin H."/>
            <person name="Quesada-Ocampo L."/>
            <person name="Vaillancourt B."/>
            <person name="Sakai H."/>
            <person name="Lee S.S."/>
            <person name="Kim J."/>
            <person name="Numa H."/>
            <person name="Itoh T."/>
            <person name="Buell C.R."/>
            <person name="Matsumoto T."/>
        </authorList>
    </citation>
    <scope>GENOME REANNOTATION</scope>
    <source>
        <strain>cv. Nipponbare</strain>
    </source>
</reference>
<reference key="4">
    <citation type="journal article" date="2003" name="Science">
        <title>Collection, mapping, and annotation of over 28,000 cDNA clones from japonica rice.</title>
        <authorList>
            <consortium name="The rice full-length cDNA consortium"/>
        </authorList>
    </citation>
    <scope>NUCLEOTIDE SEQUENCE [LARGE SCALE MRNA]</scope>
    <source>
        <strain>cv. Nipponbare</strain>
    </source>
</reference>
<name>CESA3_ORYSJ</name>
<organism>
    <name type="scientific">Oryza sativa subsp. japonica</name>
    <name type="common">Rice</name>
    <dbReference type="NCBI Taxonomy" id="39947"/>
    <lineage>
        <taxon>Eukaryota</taxon>
        <taxon>Viridiplantae</taxon>
        <taxon>Streptophyta</taxon>
        <taxon>Embryophyta</taxon>
        <taxon>Tracheophyta</taxon>
        <taxon>Spermatophyta</taxon>
        <taxon>Magnoliopsida</taxon>
        <taxon>Liliopsida</taxon>
        <taxon>Poales</taxon>
        <taxon>Poaceae</taxon>
        <taxon>BOP clade</taxon>
        <taxon>Oryzoideae</taxon>
        <taxon>Oryzeae</taxon>
        <taxon>Oryzinae</taxon>
        <taxon>Oryza</taxon>
        <taxon>Oryza sativa</taxon>
    </lineage>
</organism>
<feature type="chain" id="PRO_0000319361" description="Probable cellulose synthase A catalytic subunit 3 [UDP-forming]">
    <location>
        <begin position="1"/>
        <end position="1093"/>
    </location>
</feature>
<feature type="topological domain" description="Cytoplasmic" evidence="3">
    <location>
        <begin position="1"/>
        <end position="280"/>
    </location>
</feature>
<feature type="transmembrane region" description="Helical" evidence="3">
    <location>
        <begin position="281"/>
        <end position="301"/>
    </location>
</feature>
<feature type="topological domain" description="Extracellular" evidence="3">
    <location>
        <begin position="302"/>
        <end position="303"/>
    </location>
</feature>
<feature type="transmembrane region" description="Helical" evidence="3">
    <location>
        <begin position="304"/>
        <end position="324"/>
    </location>
</feature>
<feature type="topological domain" description="Cytoplasmic" evidence="3">
    <location>
        <begin position="325"/>
        <end position="869"/>
    </location>
</feature>
<feature type="transmembrane region" description="Helical" evidence="3">
    <location>
        <begin position="870"/>
        <end position="890"/>
    </location>
</feature>
<feature type="topological domain" description="Extracellular" evidence="3">
    <location>
        <begin position="891"/>
        <end position="902"/>
    </location>
</feature>
<feature type="transmembrane region" description="Helical" evidence="3">
    <location>
        <begin position="903"/>
        <end position="923"/>
    </location>
</feature>
<feature type="topological domain" description="Cytoplasmic" evidence="3">
    <location>
        <begin position="924"/>
        <end position="939"/>
    </location>
</feature>
<feature type="transmembrane region" description="Helical" evidence="3">
    <location>
        <begin position="940"/>
        <end position="960"/>
    </location>
</feature>
<feature type="topological domain" description="Extracellular" evidence="3">
    <location>
        <begin position="961"/>
        <end position="988"/>
    </location>
</feature>
<feature type="transmembrane region" description="Helical" evidence="3">
    <location>
        <begin position="989"/>
        <end position="1009"/>
    </location>
</feature>
<feature type="topological domain" description="Cytoplasmic" evidence="3">
    <location>
        <begin position="1010"/>
        <end position="1020"/>
    </location>
</feature>
<feature type="transmembrane region" description="Helical" evidence="3">
    <location>
        <begin position="1021"/>
        <end position="1041"/>
    </location>
</feature>
<feature type="topological domain" description="Extracellular" evidence="3">
    <location>
        <begin position="1042"/>
        <end position="1050"/>
    </location>
</feature>
<feature type="transmembrane region" description="Helical" evidence="3">
    <location>
        <begin position="1051"/>
        <end position="1071"/>
    </location>
</feature>
<feature type="topological domain" description="Cytoplasmic" evidence="3">
    <location>
        <begin position="1072"/>
        <end position="1093"/>
    </location>
</feature>
<feature type="zinc finger region" description="RING-type; degenerate" evidence="4">
    <location>
        <begin position="39"/>
        <end position="85"/>
    </location>
</feature>
<feature type="region of interest" description="Disordered" evidence="5">
    <location>
        <begin position="233"/>
        <end position="257"/>
    </location>
</feature>
<feature type="coiled-coil region" evidence="3">
    <location>
        <begin position="453"/>
        <end position="480"/>
    </location>
</feature>
<feature type="compositionally biased region" description="Basic and acidic residues" evidence="5">
    <location>
        <begin position="233"/>
        <end position="246"/>
    </location>
</feature>
<feature type="active site" evidence="3">
    <location>
        <position position="399"/>
    </location>
</feature>
<feature type="active site" evidence="3">
    <location>
        <position position="793"/>
    </location>
</feature>
<feature type="binding site" evidence="2">
    <location>
        <position position="39"/>
    </location>
    <ligand>
        <name>Zn(2+)</name>
        <dbReference type="ChEBI" id="CHEBI:29105"/>
        <label>1</label>
    </ligand>
</feature>
<feature type="binding site" evidence="2">
    <location>
        <position position="42"/>
    </location>
    <ligand>
        <name>Zn(2+)</name>
        <dbReference type="ChEBI" id="CHEBI:29105"/>
        <label>1</label>
    </ligand>
</feature>
<feature type="binding site" evidence="2">
    <location>
        <position position="58"/>
    </location>
    <ligand>
        <name>Zn(2+)</name>
        <dbReference type="ChEBI" id="CHEBI:29105"/>
        <label>2</label>
    </ligand>
</feature>
<feature type="binding site" evidence="2">
    <location>
        <position position="61"/>
    </location>
    <ligand>
        <name>Zn(2+)</name>
        <dbReference type="ChEBI" id="CHEBI:29105"/>
        <label>2</label>
    </ligand>
</feature>
<feature type="binding site" evidence="2">
    <location>
        <position position="66"/>
    </location>
    <ligand>
        <name>Zn(2+)</name>
        <dbReference type="ChEBI" id="CHEBI:29105"/>
        <label>1</label>
    </ligand>
</feature>
<feature type="binding site" evidence="2">
    <location>
        <position position="69"/>
    </location>
    <ligand>
        <name>Zn(2+)</name>
        <dbReference type="ChEBI" id="CHEBI:29105"/>
        <label>1</label>
    </ligand>
</feature>
<feature type="binding site" evidence="2">
    <location>
        <position position="81"/>
    </location>
    <ligand>
        <name>Zn(2+)</name>
        <dbReference type="ChEBI" id="CHEBI:29105"/>
        <label>2</label>
    </ligand>
</feature>
<feature type="binding site" evidence="2">
    <location>
        <position position="84"/>
    </location>
    <ligand>
        <name>Zn(2+)</name>
        <dbReference type="ChEBI" id="CHEBI:29105"/>
        <label>2</label>
    </ligand>
</feature>
<feature type="binding site" evidence="1">
    <location>
        <position position="363"/>
    </location>
    <ligand>
        <name>UDP-alpha-D-glucose</name>
        <dbReference type="ChEBI" id="CHEBI:58885"/>
    </ligand>
</feature>
<feature type="binding site" evidence="1">
    <location>
        <position position="369"/>
    </location>
    <ligand>
        <name>UDP-alpha-D-glucose</name>
        <dbReference type="ChEBI" id="CHEBI:58885"/>
    </ligand>
</feature>
<feature type="binding site" evidence="1">
    <location>
        <position position="370"/>
    </location>
    <ligand>
        <name>UDP-alpha-D-glucose</name>
        <dbReference type="ChEBI" id="CHEBI:58885"/>
    </ligand>
</feature>
<feature type="binding site" evidence="1">
    <location>
        <position position="399"/>
    </location>
    <ligand>
        <name>UDP-alpha-D-glucose</name>
        <dbReference type="ChEBI" id="CHEBI:58885"/>
    </ligand>
</feature>
<feature type="binding site" evidence="1">
    <location>
        <position position="540"/>
    </location>
    <ligand>
        <name>UDP-alpha-D-glucose</name>
        <dbReference type="ChEBI" id="CHEBI:58885"/>
    </ligand>
</feature>
<feature type="binding site" evidence="1">
    <location>
        <position position="541"/>
    </location>
    <ligand>
        <name>Mn(2+)</name>
        <dbReference type="ChEBI" id="CHEBI:29035"/>
    </ligand>
</feature>
<feature type="binding site" evidence="1">
    <location>
        <position position="565"/>
    </location>
    <ligand>
        <name>Mn(2+)</name>
        <dbReference type="ChEBI" id="CHEBI:29035"/>
    </ligand>
</feature>
<gene>
    <name type="primary">CESA3</name>
    <name type="ordered locus">Os07g0424400</name>
    <name type="ordered locus">LOC_Os07g24190</name>
    <name type="ORF">P0409D09.11</name>
</gene>
<sequence length="1093" mass="123503">MEASAGLVAGSHNRNELVVIRRDGDPGPKPLRQQNGQVCQICGDDVGLNPDGEPFVACNECAFPVCRDCYEYERREGTQNCPQCKTRFKRLRGCARVPGDEEEDGVDDLENEFNWRDRNDSQYVAESMLHAHMSYGRGGVDVNGVPQPFQPNPNVPLLTDGQMVDDIPPEQHALVPSFMGGGGKRIHPLPYADPNLPVQPRSMDPSKDLAAYGYGSVAWKERMESWKQKQERLHQMRNDGGGKDWDGDGDDGDLPLMDEARQPLSRKVPIPSSQINPYRMVIIIRLVVLGFFFHYRVMHPVPDAFALWLISVICEIWFAMSWILDQFPKWFPIERETYLDRLTLRFDKEGQTSQLAPIDFFVSTVDPLKEPPLVTANTVLSILAVDYPVDKVSCYVSDDGAAMLTFEALSETSEFAKKWVPFCKKYSIEPRAPEWYFQQKIDYLKDKVAPYFVRERRAMKREYEEFKVRINALVAKAQKVPEEGWTMQDGTPWPGNNVRDHPGMIQVFLGQSGGHDIEGNELPRLVYVSREKRPGYNHHKKAGAMNALVRVSAVLTNAPYMLNLDCDHYINNSKAIKEAMCFMMDPLVGKKVCYVQFPQRFDGIDRHDRYANRNVVFFDINMKGLDGIQGPIYVGTGCVFRRQALYGYDAPKTKKPPSRTCNCWPKWCICCCCFGDRKSKKKTTKPKTEKKKRSFFKRAENQSPAYALGEIEEGAPGAENEKAGIVNQQKLEKKFGQSSVFVASTLLENGGTLKSASPASLLKEAIHVISCGYEDKTDWGKEIGWIYGSVTEDILTGFKMHCHGWRSIYCIPKLPAFKGSAPLNLSDRLHQVLRWALGSVEIFFSNHCPLWYGYGGGLKCLERFSYINSIVYPFTSIPLLAYCTLPAICLLTGKFITPELTNVASLWFMSLFICIFATGILEMRWSGVGIDDWWRNEQFWVIGGVSSHLFALFQGLLKVIAGIDTSFTVTSKGGDDEEFSELYTFKWTTLLIPPTTLLLLNFIGVVAGVSNAINNGYESWGPLFGKLFFAFWVIVHLYPFLKGLVGRQNRTPTIVIVWSILLASIFSLLWVRIDPFLAKNDGPLLEECGLDCN</sequence>
<protein>
    <recommendedName>
        <fullName>Probable cellulose synthase A catalytic subunit 3 [UDP-forming]</fullName>
        <ecNumber evidence="6">2.4.1.12</ecNumber>
    </recommendedName>
    <alternativeName>
        <fullName>OsCesA3</fullName>
    </alternativeName>
</protein>
<dbReference type="EC" id="2.4.1.12" evidence="6"/>
<dbReference type="EMBL" id="AP004298">
    <property type="protein sequence ID" value="BAD30574.1"/>
    <property type="molecule type" value="Genomic_DNA"/>
</dbReference>
<dbReference type="EMBL" id="AP008213">
    <property type="protein sequence ID" value="BAF21401.1"/>
    <property type="molecule type" value="Genomic_DNA"/>
</dbReference>
<dbReference type="EMBL" id="AP014963">
    <property type="protein sequence ID" value="BAT01208.1"/>
    <property type="molecule type" value="Genomic_DNA"/>
</dbReference>
<dbReference type="EMBL" id="AK073561">
    <property type="status" value="NOT_ANNOTATED_CDS"/>
    <property type="molecule type" value="mRNA"/>
</dbReference>
<dbReference type="EMBL" id="AK121193">
    <property type="protein sequence ID" value="BAH00360.1"/>
    <property type="molecule type" value="mRNA"/>
</dbReference>
<dbReference type="RefSeq" id="XP_015646807.1">
    <property type="nucleotide sequence ID" value="XM_015791321.1"/>
</dbReference>
<dbReference type="SMR" id="Q69V23"/>
<dbReference type="FunCoup" id="Q69V23">
    <property type="interactions" value="197"/>
</dbReference>
<dbReference type="STRING" id="39947.Q69V23"/>
<dbReference type="CAZy" id="GT2">
    <property type="family name" value="Glycosyltransferase Family 2"/>
</dbReference>
<dbReference type="PaxDb" id="39947-Q69V23"/>
<dbReference type="EnsemblPlants" id="Os07t0424400-01">
    <property type="protein sequence ID" value="Os07t0424400-01"/>
    <property type="gene ID" value="Os07g0424400"/>
</dbReference>
<dbReference type="EnsemblPlants" id="Os07t0424400-06">
    <property type="protein sequence ID" value="Os07t0424400-06"/>
    <property type="gene ID" value="Os07g0424400"/>
</dbReference>
<dbReference type="Gramene" id="Os07t0424400-01">
    <property type="protein sequence ID" value="Os07t0424400-01"/>
    <property type="gene ID" value="Os07g0424400"/>
</dbReference>
<dbReference type="Gramene" id="Os07t0424400-06">
    <property type="protein sequence ID" value="Os07t0424400-06"/>
    <property type="gene ID" value="Os07g0424400"/>
</dbReference>
<dbReference type="KEGG" id="dosa:Os07g0424400"/>
<dbReference type="eggNOG" id="ENOG502QQGG">
    <property type="taxonomic scope" value="Eukaryota"/>
</dbReference>
<dbReference type="HOGENOM" id="CLU_001418_0_0_1"/>
<dbReference type="InParanoid" id="Q69V23"/>
<dbReference type="OMA" id="VVHTMPQ"/>
<dbReference type="OrthoDB" id="72851at2759"/>
<dbReference type="UniPathway" id="UPA00695"/>
<dbReference type="Proteomes" id="UP000000763">
    <property type="component" value="Chromosome 7"/>
</dbReference>
<dbReference type="Proteomes" id="UP000059680">
    <property type="component" value="Chromosome 7"/>
</dbReference>
<dbReference type="ExpressionAtlas" id="Q69V23">
    <property type="expression patterns" value="baseline and differential"/>
</dbReference>
<dbReference type="GO" id="GO:0005886">
    <property type="term" value="C:plasma membrane"/>
    <property type="evidence" value="ECO:0000318"/>
    <property type="project" value="GO_Central"/>
</dbReference>
<dbReference type="GO" id="GO:0016760">
    <property type="term" value="F:cellulose synthase (UDP-forming) activity"/>
    <property type="evidence" value="ECO:0007669"/>
    <property type="project" value="UniProtKB-EC"/>
</dbReference>
<dbReference type="GO" id="GO:0016759">
    <property type="term" value="F:cellulose synthase activity"/>
    <property type="evidence" value="ECO:0000318"/>
    <property type="project" value="GO_Central"/>
</dbReference>
<dbReference type="GO" id="GO:0008270">
    <property type="term" value="F:zinc ion binding"/>
    <property type="evidence" value="ECO:0007669"/>
    <property type="project" value="UniProtKB-KW"/>
</dbReference>
<dbReference type="GO" id="GO:0071555">
    <property type="term" value="P:cell wall organization"/>
    <property type="evidence" value="ECO:0007669"/>
    <property type="project" value="UniProtKB-KW"/>
</dbReference>
<dbReference type="GO" id="GO:0030244">
    <property type="term" value="P:cellulose biosynthetic process"/>
    <property type="evidence" value="ECO:0000318"/>
    <property type="project" value="GO_Central"/>
</dbReference>
<dbReference type="GO" id="GO:0009833">
    <property type="term" value="P:plant-type primary cell wall biogenesis"/>
    <property type="evidence" value="ECO:0000318"/>
    <property type="project" value="GO_Central"/>
</dbReference>
<dbReference type="CDD" id="cd16617">
    <property type="entry name" value="mRING-HC-C4C4_CesA"/>
    <property type="match status" value="1"/>
</dbReference>
<dbReference type="FunFam" id="3.30.40.10:FF:000031">
    <property type="entry name" value="Cellulose synthase"/>
    <property type="match status" value="1"/>
</dbReference>
<dbReference type="FunFam" id="3.90.550.10:FF:000009">
    <property type="entry name" value="Cellulose synthase"/>
    <property type="match status" value="1"/>
</dbReference>
<dbReference type="Gene3D" id="3.90.550.10">
    <property type="entry name" value="Spore Coat Polysaccharide Biosynthesis Protein SpsA, Chain A"/>
    <property type="match status" value="1"/>
</dbReference>
<dbReference type="Gene3D" id="3.30.40.10">
    <property type="entry name" value="Zinc/RING finger domain, C3HC4 (zinc finger)"/>
    <property type="match status" value="1"/>
</dbReference>
<dbReference type="InterPro" id="IPR005150">
    <property type="entry name" value="Cellulose_synth"/>
</dbReference>
<dbReference type="InterPro" id="IPR027934">
    <property type="entry name" value="CES_Znf_RING"/>
</dbReference>
<dbReference type="InterPro" id="IPR029044">
    <property type="entry name" value="Nucleotide-diphossugar_trans"/>
</dbReference>
<dbReference type="InterPro" id="IPR001841">
    <property type="entry name" value="Znf_RING"/>
</dbReference>
<dbReference type="InterPro" id="IPR013083">
    <property type="entry name" value="Znf_RING/FYVE/PHD"/>
</dbReference>
<dbReference type="PANTHER" id="PTHR13301">
    <property type="entry name" value="X-BOX TRANSCRIPTION FACTOR-RELATED"/>
    <property type="match status" value="1"/>
</dbReference>
<dbReference type="Pfam" id="PF03552">
    <property type="entry name" value="Cellulose_synt"/>
    <property type="match status" value="1"/>
</dbReference>
<dbReference type="Pfam" id="PF14569">
    <property type="entry name" value="zf-UDP"/>
    <property type="match status" value="1"/>
</dbReference>
<dbReference type="SUPFAM" id="SSF53448">
    <property type="entry name" value="Nucleotide-diphospho-sugar transferases"/>
    <property type="match status" value="1"/>
</dbReference>
<dbReference type="SUPFAM" id="SSF57850">
    <property type="entry name" value="RING/U-box"/>
    <property type="match status" value="1"/>
</dbReference>
<dbReference type="PROSITE" id="PS50089">
    <property type="entry name" value="ZF_RING_2"/>
    <property type="match status" value="1"/>
</dbReference>
<evidence type="ECO:0000250" key="1">
    <source>
        <dbReference type="UniProtKB" id="Q941L0"/>
    </source>
</evidence>
<evidence type="ECO:0000250" key="2">
    <source>
        <dbReference type="UniProtKB" id="Q9SWW6"/>
    </source>
</evidence>
<evidence type="ECO:0000255" key="3"/>
<evidence type="ECO:0000255" key="4">
    <source>
        <dbReference type="PROSITE-ProRule" id="PRU00175"/>
    </source>
</evidence>
<evidence type="ECO:0000256" key="5">
    <source>
        <dbReference type="SAM" id="MobiDB-lite"/>
    </source>
</evidence>
<evidence type="ECO:0000305" key="6"/>
<accession>Q69V23</accession>
<accession>B7F6W2</accession>